<name>T2R60_PONPY</name>
<gene>
    <name type="primary">TAS2R60</name>
</gene>
<accession>Q645U7</accession>
<comment type="function">
    <text evidence="1">Receptor that may play a role in the perception of bitterness and is gustducin-linked. May play a role in sensing the chemical composition of the gastrointestinal content. The activity of this receptor may stimulate alpha gustducin, mediate PLC-beta-2 activation and lead to the gating of TRPM5 (By similarity).</text>
</comment>
<comment type="subcellular location">
    <subcellularLocation>
        <location>Membrane</location>
        <topology>Multi-pass membrane protein</topology>
    </subcellularLocation>
</comment>
<comment type="miscellaneous">
    <text>Most taste cells may be activated by a limited number of bitter compounds; individual taste cells can discriminate among bitter stimuli.</text>
</comment>
<comment type="similarity">
    <text evidence="3">Belongs to the G-protein coupled receptor T2R family.</text>
</comment>
<keyword id="KW-0297">G-protein coupled receptor</keyword>
<keyword id="KW-0325">Glycoprotein</keyword>
<keyword id="KW-0472">Membrane</keyword>
<keyword id="KW-0675">Receptor</keyword>
<keyword id="KW-0716">Sensory transduction</keyword>
<keyword id="KW-0919">Taste</keyword>
<keyword id="KW-0807">Transducer</keyword>
<keyword id="KW-0812">Transmembrane</keyword>
<keyword id="KW-1133">Transmembrane helix</keyword>
<protein>
    <recommendedName>
        <fullName>Taste receptor type 2 member 60</fullName>
        <shortName>T2R60</shortName>
    </recommendedName>
    <alternativeName>
        <fullName>T2R56</fullName>
    </alternativeName>
</protein>
<evidence type="ECO:0000250" key="1"/>
<evidence type="ECO:0000255" key="2"/>
<evidence type="ECO:0000305" key="3"/>
<dbReference type="EMBL" id="AY724986">
    <property type="protein sequence ID" value="AAU21172.1"/>
    <property type="molecule type" value="Genomic_DNA"/>
</dbReference>
<dbReference type="SMR" id="Q645U7"/>
<dbReference type="GlyCosmos" id="Q645U7">
    <property type="glycosylation" value="1 site, No reported glycans"/>
</dbReference>
<dbReference type="GO" id="GO:0005886">
    <property type="term" value="C:plasma membrane"/>
    <property type="evidence" value="ECO:0007669"/>
    <property type="project" value="UniProtKB-ARBA"/>
</dbReference>
<dbReference type="GO" id="GO:0033038">
    <property type="term" value="F:bitter taste receptor activity"/>
    <property type="evidence" value="ECO:0007669"/>
    <property type="project" value="InterPro"/>
</dbReference>
<dbReference type="GO" id="GO:0004930">
    <property type="term" value="F:G protein-coupled receptor activity"/>
    <property type="evidence" value="ECO:0007669"/>
    <property type="project" value="UniProtKB-KW"/>
</dbReference>
<dbReference type="CDD" id="cd15018">
    <property type="entry name" value="7tm_TAS2R41-like"/>
    <property type="match status" value="1"/>
</dbReference>
<dbReference type="FunFam" id="1.20.1070.10:FF:000055">
    <property type="entry name" value="Taste receptor type 2"/>
    <property type="match status" value="1"/>
</dbReference>
<dbReference type="Gene3D" id="1.20.1070.10">
    <property type="entry name" value="Rhodopsin 7-helix transmembrane proteins"/>
    <property type="match status" value="1"/>
</dbReference>
<dbReference type="InterPro" id="IPR007960">
    <property type="entry name" value="TAS2R"/>
</dbReference>
<dbReference type="PANTHER" id="PTHR11394">
    <property type="entry name" value="TASTE RECEPTOR TYPE 2"/>
    <property type="match status" value="1"/>
</dbReference>
<dbReference type="PANTHER" id="PTHR11394:SF32">
    <property type="entry name" value="TASTE RECEPTOR TYPE 2 MEMBER 60"/>
    <property type="match status" value="1"/>
</dbReference>
<dbReference type="Pfam" id="PF05296">
    <property type="entry name" value="TAS2R"/>
    <property type="match status" value="1"/>
</dbReference>
<dbReference type="SUPFAM" id="SSF81321">
    <property type="entry name" value="Family A G protein-coupled receptor-like"/>
    <property type="match status" value="1"/>
</dbReference>
<feature type="chain" id="PRO_0000082355" description="Taste receptor type 2 member 60">
    <location>
        <begin position="1"/>
        <end position="318"/>
    </location>
</feature>
<feature type="topological domain" description="Extracellular" evidence="2">
    <location>
        <begin position="1"/>
        <end position="7"/>
    </location>
</feature>
<feature type="transmembrane region" description="Helical; Name=1" evidence="2">
    <location>
        <begin position="8"/>
        <end position="28"/>
    </location>
</feature>
<feature type="topological domain" description="Cytoplasmic" evidence="2">
    <location>
        <begin position="29"/>
        <end position="40"/>
    </location>
</feature>
<feature type="transmembrane region" description="Helical; Name=2" evidence="2">
    <location>
        <begin position="41"/>
        <end position="61"/>
    </location>
</feature>
<feature type="topological domain" description="Extracellular" evidence="2">
    <location>
        <begin position="62"/>
        <end position="88"/>
    </location>
</feature>
<feature type="transmembrane region" description="Helical; Name=3" evidence="2">
    <location>
        <begin position="89"/>
        <end position="109"/>
    </location>
</feature>
<feature type="topological domain" description="Cytoplasmic" evidence="2">
    <location>
        <begin position="110"/>
        <end position="128"/>
    </location>
</feature>
<feature type="transmembrane region" description="Helical; Name=4" evidence="2">
    <location>
        <begin position="129"/>
        <end position="149"/>
    </location>
</feature>
<feature type="topological domain" description="Extracellular" evidence="2">
    <location>
        <begin position="150"/>
        <end position="183"/>
    </location>
</feature>
<feature type="transmembrane region" description="Helical; Name=5" evidence="2">
    <location>
        <begin position="184"/>
        <end position="204"/>
    </location>
</feature>
<feature type="topological domain" description="Cytoplasmic" evidence="2">
    <location>
        <begin position="205"/>
        <end position="234"/>
    </location>
</feature>
<feature type="transmembrane region" description="Helical; Name=6" evidence="2">
    <location>
        <begin position="235"/>
        <end position="255"/>
    </location>
</feature>
<feature type="topological domain" description="Extracellular" evidence="2">
    <location>
        <begin position="256"/>
        <end position="264"/>
    </location>
</feature>
<feature type="transmembrane region" description="Helical; Name=7" evidence="2">
    <location>
        <begin position="265"/>
        <end position="285"/>
    </location>
</feature>
<feature type="topological domain" description="Cytoplasmic" evidence="2">
    <location>
        <begin position="286"/>
        <end position="318"/>
    </location>
</feature>
<feature type="glycosylation site" description="N-linked (GlcNAc...) asparagine" evidence="2">
    <location>
        <position position="179"/>
    </location>
</feature>
<sequence length="318" mass="36555">MNGDHMVLGSSMTDEKAIILVIILLLLCLVAIAGNCFITAALGMEWVLQRMLLPCDKLLVSLGASRFCPQWVVMGKTTYVFLYPTAFPYNPVLRFLAFQWDLLNAATLWFSTWLSVFYCVKIATFTHPVFLWLKHKLSEWVPWMLFSSVGLSSFTTILFFIGNHRVYQSYLRNHLQPWNVTGNSIWSYCEKFYLFPLKMITWTMPTAVFFICMILLITSLGRHMKKALLTNSGFRDPSVQAHIKAMLALLSFAMLFISYFLSLVFSAAGIFPPLDFKFWVWESVIYLCAAVHPIILLFSNRRLRAVLKRCRSSRCGTP</sequence>
<reference key="1">
    <citation type="journal article" date="2005" name="Mol. Biol. Evol.">
        <title>Evolution of bitter taste receptors in humans and apes.</title>
        <authorList>
            <person name="Fischer A."/>
            <person name="Gilad Y."/>
            <person name="Man O."/>
            <person name="Paeaebo S."/>
        </authorList>
    </citation>
    <scope>NUCLEOTIDE SEQUENCE [GENOMIC DNA]</scope>
</reference>
<proteinExistence type="inferred from homology"/>
<organism>
    <name type="scientific">Pongo pygmaeus</name>
    <name type="common">Bornean orangutan</name>
    <dbReference type="NCBI Taxonomy" id="9600"/>
    <lineage>
        <taxon>Eukaryota</taxon>
        <taxon>Metazoa</taxon>
        <taxon>Chordata</taxon>
        <taxon>Craniata</taxon>
        <taxon>Vertebrata</taxon>
        <taxon>Euteleostomi</taxon>
        <taxon>Mammalia</taxon>
        <taxon>Eutheria</taxon>
        <taxon>Euarchontoglires</taxon>
        <taxon>Primates</taxon>
        <taxon>Haplorrhini</taxon>
        <taxon>Catarrhini</taxon>
        <taxon>Hominidae</taxon>
        <taxon>Pongo</taxon>
    </lineage>
</organism>